<organism>
    <name type="scientific">Pongo pygmaeus</name>
    <name type="common">Bornean orangutan</name>
    <dbReference type="NCBI Taxonomy" id="9600"/>
    <lineage>
        <taxon>Eukaryota</taxon>
        <taxon>Metazoa</taxon>
        <taxon>Chordata</taxon>
        <taxon>Craniata</taxon>
        <taxon>Vertebrata</taxon>
        <taxon>Euteleostomi</taxon>
        <taxon>Mammalia</taxon>
        <taxon>Eutheria</taxon>
        <taxon>Euarchontoglires</taxon>
        <taxon>Primates</taxon>
        <taxon>Haplorrhini</taxon>
        <taxon>Catarrhini</taxon>
        <taxon>Hominidae</taxon>
        <taxon>Pongo</taxon>
    </lineage>
</organism>
<proteinExistence type="evidence at transcript level"/>
<gene>
    <name type="primary">RNASE1</name>
    <name type="synonym">RNS1</name>
</gene>
<keyword id="KW-1015">Disulfide bond</keyword>
<keyword id="KW-0255">Endonuclease</keyword>
<keyword id="KW-0325">Glycoprotein</keyword>
<keyword id="KW-0378">Hydrolase</keyword>
<keyword id="KW-0456">Lyase</keyword>
<keyword id="KW-0540">Nuclease</keyword>
<keyword id="KW-0964">Secreted</keyword>
<keyword id="KW-0732">Signal</keyword>
<protein>
    <recommendedName>
        <fullName>Ribonuclease pancreatic</fullName>
        <ecNumber>4.6.1.18</ecNumber>
    </recommendedName>
    <alternativeName>
        <fullName>RNase 1</fullName>
    </alternativeName>
    <alternativeName>
        <fullName>RNase A</fullName>
    </alternativeName>
</protein>
<accession>Q8SQ12</accession>
<accession>Q1KHR1</accession>
<accession>Q5R5A9</accession>
<feature type="signal peptide" evidence="1">
    <location>
        <begin position="1"/>
        <end position="28"/>
    </location>
</feature>
<feature type="chain" id="PRO_0000030937" description="Ribonuclease pancreatic">
    <location>
        <begin position="29"/>
        <end position="156"/>
    </location>
</feature>
<feature type="active site" description="Proton acceptor" evidence="1">
    <location>
        <position position="40"/>
    </location>
</feature>
<feature type="active site" description="Proton donor" evidence="1">
    <location>
        <position position="147"/>
    </location>
</feature>
<feature type="binding site" evidence="1">
    <location>
        <position position="35"/>
    </location>
    <ligand>
        <name>substrate</name>
    </ligand>
</feature>
<feature type="binding site" evidence="1">
    <location>
        <position position="38"/>
    </location>
    <ligand>
        <name>substrate</name>
    </ligand>
</feature>
<feature type="binding site" evidence="1">
    <location>
        <begin position="69"/>
        <end position="73"/>
    </location>
    <ligand>
        <name>substrate</name>
    </ligand>
</feature>
<feature type="binding site" evidence="1">
    <location>
        <position position="94"/>
    </location>
    <ligand>
        <name>substrate</name>
    </ligand>
</feature>
<feature type="binding site" evidence="1">
    <location>
        <position position="113"/>
    </location>
    <ligand>
        <name>substrate</name>
    </ligand>
</feature>
<feature type="glycosylation site" description="N-linked (GlcNAc...) asparagine" evidence="2">
    <location>
        <position position="50"/>
    </location>
</feature>
<feature type="glycosylation site" description="N-linked (GlcNAc...) asparagine" evidence="2">
    <location>
        <position position="62"/>
    </location>
</feature>
<feature type="glycosylation site" description="N-linked (GlcNAc...) asparagine" evidence="2">
    <location>
        <position position="104"/>
    </location>
</feature>
<feature type="disulfide bond" evidence="1">
    <location>
        <begin position="54"/>
        <end position="112"/>
    </location>
</feature>
<feature type="disulfide bond" evidence="1">
    <location>
        <begin position="68"/>
        <end position="123"/>
    </location>
</feature>
<feature type="disulfide bond" evidence="1">
    <location>
        <begin position="86"/>
        <end position="138"/>
    </location>
</feature>
<feature type="disulfide bond" evidence="1">
    <location>
        <begin position="93"/>
        <end position="100"/>
    </location>
</feature>
<feature type="sequence conflict" description="In Ref. 3; CAH93057." evidence="3" ref="3">
    <original>T</original>
    <variation>P</variation>
    <location>
        <position position="129"/>
    </location>
</feature>
<reference key="1">
    <citation type="journal article" date="2002" name="Nat. Genet.">
        <title>Adaptive evolution of a duplicated pancreatic ribonuclease gene in a leaf-eating monkey.</title>
        <authorList>
            <person name="Zhang J."/>
            <person name="Zhang Y.-P."/>
            <person name="Rosenberg H.F."/>
        </authorList>
    </citation>
    <scope>NUCLEOTIDE SEQUENCE [GENOMIC DNA]</scope>
</reference>
<reference key="2">
    <citation type="journal article" date="2006" name="Mol. Biol. Evol.">
        <title>Duplication and divergence of two distinct pancreatic ribonuclease genes in leaf-eating African and Asian colobine monkeys.</title>
        <authorList>
            <person name="Schienman J.E."/>
            <person name="Holt R.A."/>
            <person name="Auerbach M.R."/>
            <person name="Stewart C.B."/>
        </authorList>
    </citation>
    <scope>NUCLEOTIDE SEQUENCE [GENOMIC DNA]</scope>
</reference>
<reference key="3">
    <citation type="submission" date="2004-11" db="EMBL/GenBank/DDBJ databases">
        <authorList>
            <consortium name="The German cDNA consortium"/>
        </authorList>
    </citation>
    <scope>NUCLEOTIDE SEQUENCE [LARGE SCALE MRNA]</scope>
    <source>
        <tissue>Liver</tissue>
    </source>
</reference>
<comment type="function">
    <text evidence="1">Endonuclease that catalyzes the cleavage of RNA on the 3' side of pyrimidine nucleotides. Acts on single-stranded and double-stranded RNA (By similarity).</text>
</comment>
<comment type="catalytic activity">
    <reaction>
        <text>an [RNA] containing cytidine + H2O = an [RNA]-3'-cytidine-3'-phosphate + a 5'-hydroxy-ribonucleotide-3'-[RNA].</text>
        <dbReference type="EC" id="4.6.1.18"/>
    </reaction>
</comment>
<comment type="catalytic activity">
    <reaction>
        <text>an [RNA] containing uridine + H2O = an [RNA]-3'-uridine-3'-phosphate + a 5'-hydroxy-ribonucleotide-3'-[RNA].</text>
        <dbReference type="EC" id="4.6.1.18"/>
    </reaction>
</comment>
<comment type="subunit">
    <text evidence="1">Monomer. Interacts with and forms tight 1:1 complexes with RNH1. Dimerization of two such complexes may occur. Interaction with RNH1 inhibits this protein (By similarity).</text>
</comment>
<comment type="subcellular location">
    <subcellularLocation>
        <location>Secreted</location>
    </subcellularLocation>
</comment>
<comment type="tissue specificity">
    <text>Pancreas and other tissues and body fluids (indicating it may have other physiological functions besides its role in digestion).</text>
</comment>
<comment type="similarity">
    <text evidence="3">Belongs to the pancreatic ribonuclease family.</text>
</comment>
<dbReference type="EC" id="4.6.1.18"/>
<dbReference type="EMBL" id="AF449630">
    <property type="protein sequence ID" value="AAL87051.1"/>
    <property type="molecule type" value="Genomic_DNA"/>
</dbReference>
<dbReference type="EMBL" id="DQ494868">
    <property type="protein sequence ID" value="ABF00145.1"/>
    <property type="molecule type" value="Genomic_DNA"/>
</dbReference>
<dbReference type="EMBL" id="CR860954">
    <property type="protein sequence ID" value="CAH93057.1"/>
    <property type="molecule type" value="mRNA"/>
</dbReference>
<dbReference type="SMR" id="Q8SQ12"/>
<dbReference type="GlyCosmos" id="Q8SQ12">
    <property type="glycosylation" value="3 sites, No reported glycans"/>
</dbReference>
<dbReference type="KEGG" id="pon:100173814"/>
<dbReference type="GO" id="GO:0005576">
    <property type="term" value="C:extracellular region"/>
    <property type="evidence" value="ECO:0007669"/>
    <property type="project" value="UniProtKB-SubCell"/>
</dbReference>
<dbReference type="GO" id="GO:0016829">
    <property type="term" value="F:lyase activity"/>
    <property type="evidence" value="ECO:0007669"/>
    <property type="project" value="UniProtKB-KW"/>
</dbReference>
<dbReference type="GO" id="GO:0003676">
    <property type="term" value="F:nucleic acid binding"/>
    <property type="evidence" value="ECO:0007669"/>
    <property type="project" value="InterPro"/>
</dbReference>
<dbReference type="GO" id="GO:0004522">
    <property type="term" value="F:ribonuclease A activity"/>
    <property type="evidence" value="ECO:0007669"/>
    <property type="project" value="UniProtKB-EC"/>
</dbReference>
<dbReference type="GO" id="GO:0050830">
    <property type="term" value="P:defense response to Gram-positive bacterium"/>
    <property type="evidence" value="ECO:0007669"/>
    <property type="project" value="TreeGrafter"/>
</dbReference>
<dbReference type="CDD" id="cd06265">
    <property type="entry name" value="RNase_A_canonical"/>
    <property type="match status" value="1"/>
</dbReference>
<dbReference type="FunFam" id="3.10.130.10:FF:000001">
    <property type="entry name" value="Ribonuclease pancreatic"/>
    <property type="match status" value="1"/>
</dbReference>
<dbReference type="Gene3D" id="3.10.130.10">
    <property type="entry name" value="Ribonuclease A-like domain"/>
    <property type="match status" value="1"/>
</dbReference>
<dbReference type="InterPro" id="IPR001427">
    <property type="entry name" value="RNaseA"/>
</dbReference>
<dbReference type="InterPro" id="IPR036816">
    <property type="entry name" value="RNaseA-like_dom_sf"/>
</dbReference>
<dbReference type="InterPro" id="IPR023411">
    <property type="entry name" value="RNaseA_AS"/>
</dbReference>
<dbReference type="InterPro" id="IPR023412">
    <property type="entry name" value="RNaseA_domain"/>
</dbReference>
<dbReference type="PANTHER" id="PTHR11437">
    <property type="entry name" value="RIBONUCLEASE"/>
    <property type="match status" value="1"/>
</dbReference>
<dbReference type="PANTHER" id="PTHR11437:SF24">
    <property type="entry name" value="RIBONUCLEASE PANCREATIC"/>
    <property type="match status" value="1"/>
</dbReference>
<dbReference type="Pfam" id="PF00074">
    <property type="entry name" value="RnaseA"/>
    <property type="match status" value="1"/>
</dbReference>
<dbReference type="PRINTS" id="PR00794">
    <property type="entry name" value="RIBONUCLEASE"/>
</dbReference>
<dbReference type="SMART" id="SM00092">
    <property type="entry name" value="RNAse_Pc"/>
    <property type="match status" value="1"/>
</dbReference>
<dbReference type="SUPFAM" id="SSF54076">
    <property type="entry name" value="RNase A-like"/>
    <property type="match status" value="1"/>
</dbReference>
<dbReference type="PROSITE" id="PS00127">
    <property type="entry name" value="RNASE_PANCREATIC"/>
    <property type="match status" value="1"/>
</dbReference>
<sequence>MALEKSLVLLPLLVLILLVLGWVQPSLGKESRAKKFQRQHMDSGSSPNSNSTYCNQMMRRRNMTQGRCKPVNTFVHEPLVDVQNVCFQEKVTCKNGQGNCYKSNSSMHITDCRLTHGSRYPNCAYRTSTKERHIIVACEGSPYVPVHFDASVEDST</sequence>
<name>RNAS1_PONPY</name>
<evidence type="ECO:0000250" key="1"/>
<evidence type="ECO:0000255" key="2"/>
<evidence type="ECO:0000305" key="3"/>